<protein>
    <recommendedName>
        <fullName evidence="5">NAC domain-containing protein 68</fullName>
        <shortName evidence="5">ANAC068</shortName>
    </recommendedName>
    <alternativeName>
        <fullName>Protein NAC WITH TRANSMEMBRANE MOTIF 1</fullName>
    </alternativeName>
    <alternativeName>
        <fullName evidence="6">Protein NTM1-like 12</fullName>
    </alternativeName>
</protein>
<name>NAC68_ARATH</name>
<gene>
    <name type="primary">NAC68</name>
    <name evidence="6" type="synonym">NTL12</name>
    <name type="synonym">NTM1</name>
    <name type="ordered locus">At4g01540</name>
    <name type="ORF">F11O4.4</name>
</gene>
<proteinExistence type="evidence at protein level"/>
<evidence type="ECO:0000255" key="1"/>
<evidence type="ECO:0000255" key="2">
    <source>
        <dbReference type="PROSITE-ProRule" id="PRU00353"/>
    </source>
</evidence>
<evidence type="ECO:0000256" key="3">
    <source>
        <dbReference type="SAM" id="MobiDB-lite"/>
    </source>
</evidence>
<evidence type="ECO:0000269" key="4">
    <source>
    </source>
</evidence>
<evidence type="ECO:0000303" key="5">
    <source>
    </source>
</evidence>
<evidence type="ECO:0000303" key="6">
    <source>
    </source>
</evidence>
<evidence type="ECO:0000305" key="7"/>
<feature type="chain" id="PRO_0000323714" description="NAC domain-containing protein 68">
    <location>
        <begin position="1"/>
        <end position="473"/>
    </location>
</feature>
<feature type="transmembrane region" description="Helical" evidence="1">
    <location>
        <begin position="446"/>
        <end position="468"/>
    </location>
</feature>
<feature type="domain" description="NAC" evidence="2">
    <location>
        <begin position="4"/>
        <end position="154"/>
    </location>
</feature>
<feature type="DNA-binding region" evidence="2">
    <location>
        <begin position="108"/>
        <end position="160"/>
    </location>
</feature>
<feature type="region of interest" description="Disordered" evidence="3">
    <location>
        <begin position="326"/>
        <end position="380"/>
    </location>
</feature>
<feature type="compositionally biased region" description="Low complexity" evidence="3">
    <location>
        <begin position="340"/>
        <end position="354"/>
    </location>
</feature>
<feature type="compositionally biased region" description="Low complexity" evidence="3">
    <location>
        <begin position="364"/>
        <end position="379"/>
    </location>
</feature>
<feature type="sequence conflict" description="In Ref. 3; DR751097." evidence="7" ref="3">
    <original>Q</original>
    <variation>R</variation>
    <location>
        <position position="187"/>
    </location>
</feature>
<feature type="sequence conflict" description="In Ref. 3; DR751097." evidence="7" ref="3">
    <original>DN</original>
    <variation>RH</variation>
    <location>
        <begin position="281"/>
        <end position="282"/>
    </location>
</feature>
<comment type="function">
    <text evidence="4">Transcription activator activated by proteolytic cleavage through regulated intramembrane proteolysis (RIP) mediated by calpain or its functional homolog. Regulates cytokinin signaling during cell division.</text>
</comment>
<comment type="subcellular location">
    <subcellularLocation>
        <location evidence="4">Membrane</location>
        <topology evidence="4">Single-pass membrane protein</topology>
    </subcellularLocation>
    <subcellularLocation>
        <location evidence="2 4">Nucleus</location>
    </subcellularLocation>
    <text evidence="4">Localized primarily in plasma membrane or endoplasmic reticulum membrane as dormant form and, upon specific stress or signal, is processed into a transcriptionally active and nuclear form after a proteolytic cleavage through regulated intramembrane proteolysis (RIP).</text>
</comment>
<comment type="alternative products">
    <event type="alternative splicing"/>
    <isoform>
        <id>A8MQY1-1</id>
        <name>1</name>
        <sequence type="displayed"/>
    </isoform>
    <text>A number of isoforms are produced. According to EST sequences.</text>
</comment>
<comment type="induction">
    <text evidence="4">Stabilized by cytokinins.</text>
</comment>
<comment type="domain">
    <text evidence="2">The NAC domain includes a DNA binding domain and a dimerization domain.</text>
</comment>
<comment type="sequence caution" evidence="7">
    <conflict type="erroneous gene model prediction">
        <sequence resource="EMBL-CDS" id="AAC62780"/>
    </conflict>
</comment>
<comment type="sequence caution" evidence="7">
    <conflict type="erroneous gene model prediction">
        <sequence resource="EMBL-CDS" id="CAB77724"/>
    </conflict>
</comment>
<reference key="1">
    <citation type="journal article" date="1999" name="Nature">
        <title>Sequence and analysis of chromosome 4 of the plant Arabidopsis thaliana.</title>
        <authorList>
            <person name="Mayer K.F.X."/>
            <person name="Schueller C."/>
            <person name="Wambutt R."/>
            <person name="Murphy G."/>
            <person name="Volckaert G."/>
            <person name="Pohl T."/>
            <person name="Duesterhoeft A."/>
            <person name="Stiekema W."/>
            <person name="Entian K.-D."/>
            <person name="Terryn N."/>
            <person name="Harris B."/>
            <person name="Ansorge W."/>
            <person name="Brandt P."/>
            <person name="Grivell L.A."/>
            <person name="Rieger M."/>
            <person name="Weichselgartner M."/>
            <person name="de Simone V."/>
            <person name="Obermaier B."/>
            <person name="Mache R."/>
            <person name="Mueller M."/>
            <person name="Kreis M."/>
            <person name="Delseny M."/>
            <person name="Puigdomenech P."/>
            <person name="Watson M."/>
            <person name="Schmidtheini T."/>
            <person name="Reichert B."/>
            <person name="Portetelle D."/>
            <person name="Perez-Alonso M."/>
            <person name="Boutry M."/>
            <person name="Bancroft I."/>
            <person name="Vos P."/>
            <person name="Hoheisel J."/>
            <person name="Zimmermann W."/>
            <person name="Wedler H."/>
            <person name="Ridley P."/>
            <person name="Langham S.-A."/>
            <person name="McCullagh B."/>
            <person name="Bilham L."/>
            <person name="Robben J."/>
            <person name="van der Schueren J."/>
            <person name="Grymonprez B."/>
            <person name="Chuang Y.-J."/>
            <person name="Vandenbussche F."/>
            <person name="Braeken M."/>
            <person name="Weltjens I."/>
            <person name="Voet M."/>
            <person name="Bastiaens I."/>
            <person name="Aert R."/>
            <person name="Defoor E."/>
            <person name="Weitzenegger T."/>
            <person name="Bothe G."/>
            <person name="Ramsperger U."/>
            <person name="Hilbert H."/>
            <person name="Braun M."/>
            <person name="Holzer E."/>
            <person name="Brandt A."/>
            <person name="Peters S."/>
            <person name="van Staveren M."/>
            <person name="Dirkse W."/>
            <person name="Mooijman P."/>
            <person name="Klein Lankhorst R."/>
            <person name="Rose M."/>
            <person name="Hauf J."/>
            <person name="Koetter P."/>
            <person name="Berneiser S."/>
            <person name="Hempel S."/>
            <person name="Feldpausch M."/>
            <person name="Lamberth S."/>
            <person name="Van den Daele H."/>
            <person name="De Keyser A."/>
            <person name="Buysshaert C."/>
            <person name="Gielen J."/>
            <person name="Villarroel R."/>
            <person name="De Clercq R."/>
            <person name="van Montagu M."/>
            <person name="Rogers J."/>
            <person name="Cronin A."/>
            <person name="Quail M.A."/>
            <person name="Bray-Allen S."/>
            <person name="Clark L."/>
            <person name="Doggett J."/>
            <person name="Hall S."/>
            <person name="Kay M."/>
            <person name="Lennard N."/>
            <person name="McLay K."/>
            <person name="Mayes R."/>
            <person name="Pettett A."/>
            <person name="Rajandream M.A."/>
            <person name="Lyne M."/>
            <person name="Benes V."/>
            <person name="Rechmann S."/>
            <person name="Borkova D."/>
            <person name="Bloecker H."/>
            <person name="Scharfe M."/>
            <person name="Grimm M."/>
            <person name="Loehnert T.-H."/>
            <person name="Dose S."/>
            <person name="de Haan M."/>
            <person name="Maarse A.C."/>
            <person name="Schaefer M."/>
            <person name="Mueller-Auer S."/>
            <person name="Gabel C."/>
            <person name="Fuchs M."/>
            <person name="Fartmann B."/>
            <person name="Granderath K."/>
            <person name="Dauner D."/>
            <person name="Herzl A."/>
            <person name="Neumann S."/>
            <person name="Argiriou A."/>
            <person name="Vitale D."/>
            <person name="Liguori R."/>
            <person name="Piravandi E."/>
            <person name="Massenet O."/>
            <person name="Quigley F."/>
            <person name="Clabauld G."/>
            <person name="Muendlein A."/>
            <person name="Felber R."/>
            <person name="Schnabl S."/>
            <person name="Hiller R."/>
            <person name="Schmidt W."/>
            <person name="Lecharny A."/>
            <person name="Aubourg S."/>
            <person name="Chefdor F."/>
            <person name="Cooke R."/>
            <person name="Berger C."/>
            <person name="Monfort A."/>
            <person name="Casacuberta E."/>
            <person name="Gibbons T."/>
            <person name="Weber N."/>
            <person name="Vandenbol M."/>
            <person name="Bargues M."/>
            <person name="Terol J."/>
            <person name="Torres A."/>
            <person name="Perez-Perez A."/>
            <person name="Purnelle B."/>
            <person name="Bent E."/>
            <person name="Johnson S."/>
            <person name="Tacon D."/>
            <person name="Jesse T."/>
            <person name="Heijnen L."/>
            <person name="Schwarz S."/>
            <person name="Scholler P."/>
            <person name="Heber S."/>
            <person name="Francs P."/>
            <person name="Bielke C."/>
            <person name="Frishman D."/>
            <person name="Haase D."/>
            <person name="Lemcke K."/>
            <person name="Mewes H.-W."/>
            <person name="Stocker S."/>
            <person name="Zaccaria P."/>
            <person name="Bevan M."/>
            <person name="Wilson R.K."/>
            <person name="de la Bastide M."/>
            <person name="Habermann K."/>
            <person name="Parnell L."/>
            <person name="Dedhia N."/>
            <person name="Gnoj L."/>
            <person name="Schutz K."/>
            <person name="Huang E."/>
            <person name="Spiegel L."/>
            <person name="Sekhon M."/>
            <person name="Murray J."/>
            <person name="Sheet P."/>
            <person name="Cordes M."/>
            <person name="Abu-Threideh J."/>
            <person name="Stoneking T."/>
            <person name="Kalicki J."/>
            <person name="Graves T."/>
            <person name="Harmon G."/>
            <person name="Edwards J."/>
            <person name="Latreille P."/>
            <person name="Courtney L."/>
            <person name="Cloud J."/>
            <person name="Abbott A."/>
            <person name="Scott K."/>
            <person name="Johnson D."/>
            <person name="Minx P."/>
            <person name="Bentley D."/>
            <person name="Fulton B."/>
            <person name="Miller N."/>
            <person name="Greco T."/>
            <person name="Kemp K."/>
            <person name="Kramer J."/>
            <person name="Fulton L."/>
            <person name="Mardis E."/>
            <person name="Dante M."/>
            <person name="Pepin K."/>
            <person name="Hillier L.W."/>
            <person name="Nelson J."/>
            <person name="Spieth J."/>
            <person name="Ryan E."/>
            <person name="Andrews S."/>
            <person name="Geisel C."/>
            <person name="Layman D."/>
            <person name="Du H."/>
            <person name="Ali J."/>
            <person name="Berghoff A."/>
            <person name="Jones K."/>
            <person name="Drone K."/>
            <person name="Cotton M."/>
            <person name="Joshu C."/>
            <person name="Antonoiu B."/>
            <person name="Zidanic M."/>
            <person name="Strong C."/>
            <person name="Sun H."/>
            <person name="Lamar B."/>
            <person name="Yordan C."/>
            <person name="Ma P."/>
            <person name="Zhong J."/>
            <person name="Preston R."/>
            <person name="Vil D."/>
            <person name="Shekher M."/>
            <person name="Matero A."/>
            <person name="Shah R."/>
            <person name="Swaby I.K."/>
            <person name="O'Shaughnessy A."/>
            <person name="Rodriguez M."/>
            <person name="Hoffman J."/>
            <person name="Till S."/>
            <person name="Granat S."/>
            <person name="Shohdy N."/>
            <person name="Hasegawa A."/>
            <person name="Hameed A."/>
            <person name="Lodhi M."/>
            <person name="Johnson A."/>
            <person name="Chen E."/>
            <person name="Marra M.A."/>
            <person name="Martienssen R."/>
            <person name="McCombie W.R."/>
        </authorList>
    </citation>
    <scope>NUCLEOTIDE SEQUENCE [LARGE SCALE GENOMIC DNA]</scope>
    <source>
        <strain>cv. Columbia</strain>
    </source>
</reference>
<reference key="2">
    <citation type="journal article" date="2017" name="Plant J.">
        <title>Araport11: a complete reannotation of the Arabidopsis thaliana reference genome.</title>
        <authorList>
            <person name="Cheng C.Y."/>
            <person name="Krishnakumar V."/>
            <person name="Chan A.P."/>
            <person name="Thibaud-Nissen F."/>
            <person name="Schobel S."/>
            <person name="Town C.D."/>
        </authorList>
    </citation>
    <scope>GENOME REANNOTATION</scope>
    <source>
        <strain>cv. Columbia</strain>
    </source>
</reference>
<reference key="3">
    <citation type="journal article" date="2002" name="Comp. Funct. Genomics">
        <title>REGIA, an EU project on functional genomics of transcription factors from Arabidopsis thaliana.</title>
        <authorList>
            <person name="Paz-Ares J."/>
            <person name="Valencia A."/>
            <person name="Costantino P."/>
            <person name="Vittorioso P."/>
            <person name="Davies B."/>
            <person name="Gilmartin P."/>
            <person name="Giraudat J."/>
            <person name="Parcy F."/>
            <person name="Reindl A."/>
            <person name="Sablowski R."/>
            <person name="Coupland G."/>
            <person name="Martin C."/>
            <person name="Angenent G.C."/>
            <person name="Baeumlein H."/>
            <person name="Mock H.-P."/>
            <person name="Carbonero P."/>
            <person name="Colombo L."/>
            <person name="Tonelli C."/>
            <person name="Engstroem P."/>
            <person name="Droege-Laser W."/>
            <person name="Gatz C."/>
            <person name="Kavanagh T."/>
            <person name="Kushnir S."/>
            <person name="Zabeau M."/>
            <person name="Laux T."/>
            <person name="Hordsworth M."/>
            <person name="Ruberti I."/>
            <person name="Ratcliff F."/>
            <person name="Smeekens S."/>
            <person name="Somssich I."/>
            <person name="Weisshaar B."/>
            <person name="Traas J."/>
        </authorList>
    </citation>
    <scope>NUCLEOTIDE SEQUENCE [LARGE SCALE MRNA]</scope>
    <source>
        <strain>cv. Columbia</strain>
    </source>
</reference>
<reference key="4">
    <citation type="submission" date="2009-03" db="EMBL/GenBank/DDBJ databases">
        <title>ORF cloning and analysis of Arabidopsis transcription factor genes.</title>
        <authorList>
            <person name="Fujita M."/>
            <person name="Mizukado S."/>
            <person name="Seki M."/>
            <person name="Shinozaki K."/>
            <person name="Mitsuda N."/>
            <person name="Takiguchi Y."/>
            <person name="Takagi M."/>
        </authorList>
    </citation>
    <scope>NUCLEOTIDE SEQUENCE [LARGE SCALE MRNA]</scope>
</reference>
<reference key="5">
    <citation type="journal article" date="2003" name="DNA Res.">
        <title>Comprehensive analysis of NAC family genes in Oryza sativa and Arabidopsis thaliana.</title>
        <authorList>
            <person name="Ooka H."/>
            <person name="Satoh K."/>
            <person name="Doi K."/>
            <person name="Nagata T."/>
            <person name="Otomo Y."/>
            <person name="Murakami K."/>
            <person name="Matsubara K."/>
            <person name="Osato N."/>
            <person name="Kawai J."/>
            <person name="Carninci P."/>
            <person name="Hayashizaki Y."/>
            <person name="Suzuki K."/>
            <person name="Kojima K."/>
            <person name="Takahara Y."/>
            <person name="Yamamoto K."/>
            <person name="Kikuchi S."/>
        </authorList>
    </citation>
    <scope>GENE FAMILY</scope>
    <scope>NOMENCLATURE</scope>
</reference>
<reference key="6">
    <citation type="journal article" date="2006" name="Plant Cell">
        <title>A membrane-bound NAC transcription factor regulates cell division in Arabidopsis.</title>
        <authorList>
            <person name="Kim Y.-S."/>
            <person name="Kim S.-G."/>
            <person name="Park J.-E."/>
            <person name="Park H.-Y."/>
            <person name="Lim M.-H."/>
            <person name="Chua N.-H."/>
            <person name="Park C.-M."/>
        </authorList>
    </citation>
    <scope>FUNCTION</scope>
    <scope>INDUCTION</scope>
    <scope>SUBCELLULAR LOCATION</scope>
    <scope>PROTEOLYTIC PROCESSING</scope>
    <scope>GENE FAMILY</scope>
</reference>
<reference key="7">
    <citation type="journal article" date="2007" name="Nucleic Acids Res.">
        <title>Exploring membrane-associated NAC transcription factors in Arabidopsis: implications for membrane biology in genome regulation.</title>
        <authorList>
            <person name="Kim S.Y."/>
            <person name="Kim S.G."/>
            <person name="Kim Y.S."/>
            <person name="Seo P.J."/>
            <person name="Bae M."/>
            <person name="Yoon H.K."/>
            <person name="Park C.M."/>
        </authorList>
    </citation>
    <scope>GENE FAMILY</scope>
    <scope>NOMENCLATURE</scope>
</reference>
<sequence length="473" mass="53599">MMKGLIGYRFSPTGEEVINHYLKNKLLGKYWLVDEAISEINILSHKPSKDLPKLARIQSEDLEWYFFSPIEYTNPNKMKMKRTTGSGFWKPTGVDREIRDKRGNGVVIGIKKTLVYHEGKSPHGVRTPWVMHEYHITCLPHHKRKYVVCQVKYKGEAAEISYEPSPSLVSDSHTVIAITGEPEPELQVEQPGKENLLGMSVDDLIEPMNQQEEPQGPHLAPNDDEFIRGLRHVDRGTVEYLFANEENMDGLSMNDLRIPMIVQQEDLSEWEGFNADTFFSDNNNNYNLNVHHQLTPYGDGYLNAFSGYNEGNPPDHELVMQENRNDHMPRKPVTGTIDYSSDSGSDAGSISTTSYQGTSSPNISVGSSSRHLSSCSSTDSCKDLQTCTDPSIISREIRELTQEVKQEIPRAVDAPMNNESSLVKTEKKGLFIVEDAMERNRKKPRFIYLMKMIIGNIISVLLPVKRLIPVKKL</sequence>
<dbReference type="EMBL" id="AF096370">
    <property type="protein sequence ID" value="AAC62780.1"/>
    <property type="status" value="ALT_SEQ"/>
    <property type="molecule type" value="Genomic_DNA"/>
</dbReference>
<dbReference type="EMBL" id="AL161492">
    <property type="protein sequence ID" value="CAB77724.1"/>
    <property type="status" value="ALT_SEQ"/>
    <property type="molecule type" value="Genomic_DNA"/>
</dbReference>
<dbReference type="EMBL" id="CP002687">
    <property type="protein sequence ID" value="AEE82038.1"/>
    <property type="molecule type" value="Genomic_DNA"/>
</dbReference>
<dbReference type="EMBL" id="DR751097">
    <property type="status" value="NOT_ANNOTATED_CDS"/>
    <property type="molecule type" value="mRNA"/>
</dbReference>
<dbReference type="EMBL" id="DR751098">
    <property type="status" value="NOT_ANNOTATED_CDS"/>
    <property type="molecule type" value="mRNA"/>
</dbReference>
<dbReference type="EMBL" id="AB493671">
    <property type="protein sequence ID" value="BAH30509.1"/>
    <property type="molecule type" value="mRNA"/>
</dbReference>
<dbReference type="PIR" id="T01940">
    <property type="entry name" value="T01940"/>
</dbReference>
<dbReference type="RefSeq" id="NP_001078343.1">
    <property type="nucleotide sequence ID" value="NM_001084874.1"/>
</dbReference>
<dbReference type="RefSeq" id="NP_192063.2">
    <molecule id="A8MQY1-1"/>
    <property type="nucleotide sequence ID" value="NM_116384.3"/>
</dbReference>
<dbReference type="SMR" id="A8MQY1"/>
<dbReference type="BioGRID" id="13438">
    <property type="interactions" value="2"/>
</dbReference>
<dbReference type="IntAct" id="A8MQY1">
    <property type="interactions" value="2"/>
</dbReference>
<dbReference type="STRING" id="3702.A8MQY1"/>
<dbReference type="PaxDb" id="3702-AT4G01540.1"/>
<dbReference type="EnsemblPlants" id="AT4G01540.1">
    <molecule id="A8MQY1-1"/>
    <property type="protein sequence ID" value="AT4G01540.1"/>
    <property type="gene ID" value="AT4G01540"/>
</dbReference>
<dbReference type="GeneID" id="828149"/>
<dbReference type="Gramene" id="AT4G01540.1">
    <molecule id="A8MQY1-1"/>
    <property type="protein sequence ID" value="AT4G01540.1"/>
    <property type="gene ID" value="AT4G01540"/>
</dbReference>
<dbReference type="KEGG" id="ath:AT4G01540"/>
<dbReference type="Araport" id="AT4G01540"/>
<dbReference type="TAIR" id="AT4G01540">
    <property type="gene designation" value="NTM1"/>
</dbReference>
<dbReference type="InParanoid" id="A8MQY1"/>
<dbReference type="PhylomeDB" id="A8MQY1"/>
<dbReference type="PRO" id="PR:A8MQY1"/>
<dbReference type="Proteomes" id="UP000006548">
    <property type="component" value="Chromosome 4"/>
</dbReference>
<dbReference type="ExpressionAtlas" id="A8MQY1">
    <property type="expression patterns" value="baseline and differential"/>
</dbReference>
<dbReference type="GO" id="GO:0005789">
    <property type="term" value="C:endoplasmic reticulum membrane"/>
    <property type="evidence" value="ECO:0000314"/>
    <property type="project" value="TAIR"/>
</dbReference>
<dbReference type="GO" id="GO:0031965">
    <property type="term" value="C:nuclear membrane"/>
    <property type="evidence" value="ECO:0000314"/>
    <property type="project" value="TAIR"/>
</dbReference>
<dbReference type="GO" id="GO:0005634">
    <property type="term" value="C:nucleus"/>
    <property type="evidence" value="ECO:0000314"/>
    <property type="project" value="TAIR"/>
</dbReference>
<dbReference type="GO" id="GO:0003677">
    <property type="term" value="F:DNA binding"/>
    <property type="evidence" value="ECO:0007669"/>
    <property type="project" value="UniProtKB-KW"/>
</dbReference>
<dbReference type="GO" id="GO:0003700">
    <property type="term" value="F:DNA-binding transcription factor activity"/>
    <property type="evidence" value="ECO:0000250"/>
    <property type="project" value="TAIR"/>
</dbReference>
<dbReference type="GO" id="GO:0009736">
    <property type="term" value="P:cytokinin-activated signaling pathway"/>
    <property type="evidence" value="ECO:0000315"/>
    <property type="project" value="TAIR"/>
</dbReference>
<dbReference type="GO" id="GO:0009965">
    <property type="term" value="P:leaf morphogenesis"/>
    <property type="evidence" value="ECO:0000315"/>
    <property type="project" value="TAIR"/>
</dbReference>
<dbReference type="GO" id="GO:0045893">
    <property type="term" value="P:positive regulation of DNA-templated transcription"/>
    <property type="evidence" value="ECO:0000314"/>
    <property type="project" value="TAIR"/>
</dbReference>
<dbReference type="GO" id="GO:0051302">
    <property type="term" value="P:regulation of cell division"/>
    <property type="evidence" value="ECO:0000315"/>
    <property type="project" value="TAIR"/>
</dbReference>
<dbReference type="FunFam" id="2.170.150.80:FF:000012">
    <property type="entry name" value="NAC with transmembrane motif1"/>
    <property type="match status" value="1"/>
</dbReference>
<dbReference type="Gene3D" id="2.170.150.80">
    <property type="entry name" value="NAC domain"/>
    <property type="match status" value="1"/>
</dbReference>
<dbReference type="InterPro" id="IPR003441">
    <property type="entry name" value="NAC-dom"/>
</dbReference>
<dbReference type="InterPro" id="IPR036093">
    <property type="entry name" value="NAC_dom_sf"/>
</dbReference>
<dbReference type="PANTHER" id="PTHR31989">
    <property type="entry name" value="NAC DOMAIN-CONTAINING PROTEIN 82-RELATED"/>
    <property type="match status" value="1"/>
</dbReference>
<dbReference type="Pfam" id="PF02365">
    <property type="entry name" value="NAM"/>
    <property type="match status" value="1"/>
</dbReference>
<dbReference type="SUPFAM" id="SSF101941">
    <property type="entry name" value="NAC domain"/>
    <property type="match status" value="1"/>
</dbReference>
<dbReference type="PROSITE" id="PS51005">
    <property type="entry name" value="NAC"/>
    <property type="match status" value="1"/>
</dbReference>
<accession>A8MQY1</accession>
<accession>C0SVG8</accession>
<accession>O82591</accession>
<organism>
    <name type="scientific">Arabidopsis thaliana</name>
    <name type="common">Mouse-ear cress</name>
    <dbReference type="NCBI Taxonomy" id="3702"/>
    <lineage>
        <taxon>Eukaryota</taxon>
        <taxon>Viridiplantae</taxon>
        <taxon>Streptophyta</taxon>
        <taxon>Embryophyta</taxon>
        <taxon>Tracheophyta</taxon>
        <taxon>Spermatophyta</taxon>
        <taxon>Magnoliopsida</taxon>
        <taxon>eudicotyledons</taxon>
        <taxon>Gunneridae</taxon>
        <taxon>Pentapetalae</taxon>
        <taxon>rosids</taxon>
        <taxon>malvids</taxon>
        <taxon>Brassicales</taxon>
        <taxon>Brassicaceae</taxon>
        <taxon>Camelineae</taxon>
        <taxon>Arabidopsis</taxon>
    </lineage>
</organism>
<keyword id="KW-0010">Activator</keyword>
<keyword id="KW-0025">Alternative splicing</keyword>
<keyword id="KW-0238">DNA-binding</keyword>
<keyword id="KW-0472">Membrane</keyword>
<keyword id="KW-0539">Nucleus</keyword>
<keyword id="KW-1185">Reference proteome</keyword>
<keyword id="KW-0346">Stress response</keyword>
<keyword id="KW-0804">Transcription</keyword>
<keyword id="KW-0805">Transcription regulation</keyword>
<keyword id="KW-0812">Transmembrane</keyword>
<keyword id="KW-1133">Transmembrane helix</keyword>